<protein>
    <recommendedName>
        <fullName>N-alpha-acetyltransferase 38, NatC auxiliary subunit</fullName>
    </recommendedName>
    <alternativeName>
        <fullName>L-A virus GAG protein N-acetyltransferase subunit MAK31</fullName>
    </alternativeName>
    <alternativeName>
        <fullName>Maintenance of killer protein 31</fullName>
    </alternativeName>
    <alternativeName>
        <fullName>N-terminal acetyltransferase C complex subunit MAK31</fullName>
        <shortName>NatC complex subunit MAK31</shortName>
    </alternativeName>
</protein>
<sequence>MDILKLSDFIGNTLIVSLTEDRILVGSLVAVDAQMNLLLDHVEERMGSSSRMMGLVSVPRRSVKTIMIDKPVLQELTANKVELMANIV</sequence>
<accession>P23059</accession>
<accession>D6VR29</accession>
<feature type="chain" id="PRO_0000084554" description="N-alpha-acetyltransferase 38, NatC auxiliary subunit">
    <location>
        <begin position="1"/>
        <end position="88"/>
    </location>
</feature>
<feature type="domain" description="Sm" evidence="1">
    <location>
        <begin position="1"/>
        <end position="72"/>
    </location>
</feature>
<feature type="helix" evidence="11">
    <location>
        <begin position="6"/>
        <end position="8"/>
    </location>
</feature>
<feature type="turn" evidence="11">
    <location>
        <begin position="9"/>
        <end position="11"/>
    </location>
</feature>
<feature type="strand" evidence="11">
    <location>
        <begin position="12"/>
        <end position="21"/>
    </location>
</feature>
<feature type="strand" evidence="11">
    <location>
        <begin position="23"/>
        <end position="32"/>
    </location>
</feature>
<feature type="strand" evidence="11">
    <location>
        <begin position="37"/>
        <end position="46"/>
    </location>
</feature>
<feature type="strand" evidence="11">
    <location>
        <begin position="49"/>
        <end position="58"/>
    </location>
</feature>
<feature type="turn" evidence="11">
    <location>
        <begin position="60"/>
        <end position="62"/>
    </location>
</feature>
<feature type="strand" evidence="11">
    <location>
        <begin position="63"/>
        <end position="69"/>
    </location>
</feature>
<feature type="helix" evidence="11">
    <location>
        <begin position="70"/>
        <end position="76"/>
    </location>
</feature>
<gene>
    <name type="primary">MAK31</name>
    <name type="synonym">NAA38</name>
    <name type="ordered locus">YCR020C-A</name>
    <name type="ORF">YCR20C-A</name>
</gene>
<keyword id="KW-0002">3D-structure</keyword>
<keyword id="KW-1185">Reference proteome</keyword>
<proteinExistence type="evidence at protein level"/>
<reference key="1">
    <citation type="journal article" date="1985" name="Yeast">
        <title>The PET18 locus of Saccharomyces cerevisiae: a complex locus containing multiple genes.</title>
        <authorList>
            <person name="Toh-e A."/>
            <person name="Sahashi Y."/>
        </authorList>
    </citation>
    <scope>NUCLEOTIDE SEQUENCE [GENOMIC DNA]</scope>
</reference>
<reference key="2">
    <citation type="journal article" date="1992" name="Nature">
        <title>The complete DNA sequence of yeast chromosome III.</title>
        <authorList>
            <person name="Oliver S.G."/>
            <person name="van der Aart Q.J.M."/>
            <person name="Agostoni-Carbone M.L."/>
            <person name="Aigle M."/>
            <person name="Alberghina L."/>
            <person name="Alexandraki D."/>
            <person name="Antoine G."/>
            <person name="Anwar R."/>
            <person name="Ballesta J.P.G."/>
            <person name="Benit P."/>
            <person name="Berben G."/>
            <person name="Bergantino E."/>
            <person name="Biteau N."/>
            <person name="Bolle P.-A."/>
            <person name="Bolotin-Fukuhara M."/>
            <person name="Brown A."/>
            <person name="Brown A.J.P."/>
            <person name="Buhler J.-M."/>
            <person name="Carcano C."/>
            <person name="Carignani G."/>
            <person name="Cederberg H."/>
            <person name="Chanet R."/>
            <person name="Contreras R."/>
            <person name="Crouzet M."/>
            <person name="Daignan-Fornier B."/>
            <person name="Defoor E."/>
            <person name="Delgado M.D."/>
            <person name="Demolder J."/>
            <person name="Doira C."/>
            <person name="Dubois E."/>
            <person name="Dujon B."/>
            <person name="Duesterhoeft A."/>
            <person name="Erdmann D."/>
            <person name="Esteban M."/>
            <person name="Fabre F."/>
            <person name="Fairhead C."/>
            <person name="Faye G."/>
            <person name="Feldmann H."/>
            <person name="Fiers W."/>
            <person name="Francingues-Gaillard M.-C."/>
            <person name="Franco L."/>
            <person name="Frontali L."/>
            <person name="Fukuhara H."/>
            <person name="Fuller L.J."/>
            <person name="Galland P."/>
            <person name="Gent M.E."/>
            <person name="Gigot D."/>
            <person name="Gilliquet V."/>
            <person name="Glansdorff N."/>
            <person name="Goffeau A."/>
            <person name="Grenson M."/>
            <person name="Grisanti P."/>
            <person name="Grivell L.A."/>
            <person name="de Haan M."/>
            <person name="Haasemann M."/>
            <person name="Hatat D."/>
            <person name="Hoenicka J."/>
            <person name="Hegemann J.H."/>
            <person name="Herbert C.J."/>
            <person name="Hilger F."/>
            <person name="Hohmann S."/>
            <person name="Hollenberg C.P."/>
            <person name="Huse K."/>
            <person name="Iborra F."/>
            <person name="Indge K.J."/>
            <person name="Isono K."/>
            <person name="Jacq C."/>
            <person name="Jacquet M."/>
            <person name="James C.M."/>
            <person name="Jauniaux J.-C."/>
            <person name="Jia Y."/>
            <person name="Jimenez A."/>
            <person name="Kelly A."/>
            <person name="Kleinhans U."/>
            <person name="Kreisl P."/>
            <person name="Lanfranchi G."/>
            <person name="Lewis C."/>
            <person name="van der Linden C.G."/>
            <person name="Lucchini G."/>
            <person name="Lutzenkirchen K."/>
            <person name="Maat M.J."/>
            <person name="Mallet L."/>
            <person name="Mannhaupt G."/>
            <person name="Martegani E."/>
            <person name="Mathieu A."/>
            <person name="Maurer C.T.C."/>
            <person name="McConnell D."/>
            <person name="McKee R.A."/>
            <person name="Messenguy F."/>
            <person name="Mewes H.-W."/>
            <person name="Molemans F."/>
            <person name="Montague M.A."/>
            <person name="Muzi Falconi M."/>
            <person name="Navas L."/>
            <person name="Newlon C.S."/>
            <person name="Noone D."/>
            <person name="Pallier C."/>
            <person name="Panzeri L."/>
            <person name="Pearson B.M."/>
            <person name="Perea J."/>
            <person name="Philippsen P."/>
            <person name="Pierard A."/>
            <person name="Planta R.J."/>
            <person name="Plevani P."/>
            <person name="Poetsch B."/>
            <person name="Pohl F.M."/>
            <person name="Purnelle B."/>
            <person name="Ramezani Rad M."/>
            <person name="Rasmussen S.W."/>
            <person name="Raynal A."/>
            <person name="Remacha M.A."/>
            <person name="Richterich P."/>
            <person name="Roberts A.B."/>
            <person name="Rodriguez F."/>
            <person name="Sanz E."/>
            <person name="Schaaff-Gerstenschlaeger I."/>
            <person name="Scherens B."/>
            <person name="Schweitzer B."/>
            <person name="Shu Y."/>
            <person name="Skala J."/>
            <person name="Slonimski P.P."/>
            <person name="Sor F."/>
            <person name="Soustelle C."/>
            <person name="Spiegelberg R."/>
            <person name="Stateva L.I."/>
            <person name="Steensma H.Y."/>
            <person name="Steiner S."/>
            <person name="Thierry A."/>
            <person name="Thireos G."/>
            <person name="Tzermia M."/>
            <person name="Urrestarazu L.A."/>
            <person name="Valle G."/>
            <person name="Vetter I."/>
            <person name="van Vliet-Reedijk J.C."/>
            <person name="Voet M."/>
            <person name="Volckaert G."/>
            <person name="Vreken P."/>
            <person name="Wang H."/>
            <person name="Warmington J.R."/>
            <person name="von Wettstein D."/>
            <person name="Wicksteed B.L."/>
            <person name="Wilson C."/>
            <person name="Wurst H."/>
            <person name="Xu G."/>
            <person name="Yoshikawa A."/>
            <person name="Zimmermann F.K."/>
            <person name="Sgouros J.G."/>
        </authorList>
    </citation>
    <scope>NUCLEOTIDE SEQUENCE [LARGE SCALE GENOMIC DNA]</scope>
    <source>
        <strain>ATCC 204508 / S288c</strain>
    </source>
</reference>
<reference key="3">
    <citation type="journal article" date="2014" name="G3 (Bethesda)">
        <title>The reference genome sequence of Saccharomyces cerevisiae: Then and now.</title>
        <authorList>
            <person name="Engel S.R."/>
            <person name="Dietrich F.S."/>
            <person name="Fisk D.G."/>
            <person name="Binkley G."/>
            <person name="Balakrishnan R."/>
            <person name="Costanzo M.C."/>
            <person name="Dwight S.S."/>
            <person name="Hitz B.C."/>
            <person name="Karra K."/>
            <person name="Nash R.S."/>
            <person name="Weng S."/>
            <person name="Wong E.D."/>
            <person name="Lloyd P."/>
            <person name="Skrzypek M.S."/>
            <person name="Miyasato S.R."/>
            <person name="Simison M."/>
            <person name="Cherry J.M."/>
        </authorList>
    </citation>
    <scope>GENOME REANNOTATION</scope>
    <source>
        <strain>ATCC 204508 / S288c</strain>
    </source>
</reference>
<reference key="4">
    <citation type="journal article" date="2007" name="Genome Res.">
        <title>Approaching a complete repository of sequence-verified protein-encoding clones for Saccharomyces cerevisiae.</title>
        <authorList>
            <person name="Hu Y."/>
            <person name="Rolfs A."/>
            <person name="Bhullar B."/>
            <person name="Murthy T.V.S."/>
            <person name="Zhu C."/>
            <person name="Berger M.F."/>
            <person name="Camargo A.A."/>
            <person name="Kelley F."/>
            <person name="McCarron S."/>
            <person name="Jepson D."/>
            <person name="Richardson A."/>
            <person name="Raphael J."/>
            <person name="Moreira D."/>
            <person name="Taycher E."/>
            <person name="Zuo D."/>
            <person name="Mohr S."/>
            <person name="Kane M.F."/>
            <person name="Williamson J."/>
            <person name="Simpson A.J.G."/>
            <person name="Bulyk M.L."/>
            <person name="Harlow E."/>
            <person name="Marsischky G."/>
            <person name="Kolodner R.D."/>
            <person name="LaBaer J."/>
        </authorList>
    </citation>
    <scope>NUCLEOTIDE SEQUENCE [GENOMIC DNA]</scope>
    <source>
        <strain>ATCC 204508 / S288c</strain>
    </source>
</reference>
<reference key="5">
    <citation type="journal article" date="1999" name="Nat. Biotechnol.">
        <title>A generic protein purification method for protein complex characterization and proteome exploration.</title>
        <authorList>
            <person name="Rigaut G."/>
            <person name="Shevchenko A."/>
            <person name="Rutz B."/>
            <person name="Wilm M."/>
            <person name="Mann M."/>
            <person name="Seraphin B."/>
        </authorList>
    </citation>
    <scope>INTERACTION WITH MAK3 AND MAK10</scope>
</reference>
<reference key="6">
    <citation type="journal article" date="2001" name="J. Biol. Chem.">
        <title>NatC Nalpha-terminal acetyltransferase of yeast contains three subunits, Mak3p, Mak10p, and Mak31p.</title>
        <authorList>
            <person name="Polevoda B."/>
            <person name="Sherman F."/>
        </authorList>
    </citation>
    <scope>IDENTIFICATION IN THE NATC COMPLEX</scope>
    <scope>FUNCTION OF THE NATC COMPLEX</scope>
</reference>
<reference key="7">
    <citation type="journal article" date="2003" name="Nature">
        <title>Global analysis of protein expression in yeast.</title>
        <authorList>
            <person name="Ghaemmaghami S."/>
            <person name="Huh W.-K."/>
            <person name="Bower K."/>
            <person name="Howson R.W."/>
            <person name="Belle A."/>
            <person name="Dephoure N."/>
            <person name="O'Shea E.K."/>
            <person name="Weissman J.S."/>
        </authorList>
    </citation>
    <scope>LEVEL OF PROTEIN EXPRESSION [LARGE SCALE ANALYSIS]</scope>
</reference>
<reference key="8">
    <citation type="journal article" date="2004" name="Nat. Cell Biol.">
        <title>Golgi targeting of ARF-like GTPase Arl3p requires its Nalpha-acetylation and the integral membrane protein Sys1p.</title>
        <authorList>
            <person name="Setty S.R."/>
            <person name="Strochlic T.I."/>
            <person name="Tong A.H."/>
            <person name="Boone C."/>
            <person name="Burd C.G."/>
        </authorList>
    </citation>
    <scope>FUNCTION</scope>
</reference>
<reference key="9">
    <citation type="journal article" date="2005" name="Genetics">
        <title>Genome-wide screen for inner nuclear membrane protein targeting in Saccharomyces cerevisiae: roles for N-acetylation and an integral membrane protein.</title>
        <authorList>
            <person name="Murthi A."/>
            <person name="Hopper A.K."/>
        </authorList>
    </citation>
    <scope>FUNCTION</scope>
</reference>
<reference evidence="7 8 9 10" key="10">
    <citation type="journal article" date="2020" name="Nat. Commun.">
        <title>Divergent architecture of the heterotrimeric NatC complex explains N-terminal acetylation of cognate substrates.</title>
        <authorList>
            <person name="Grunwald S."/>
            <person name="Hopf L.V.M."/>
            <person name="Bock-Bierbaum T."/>
            <person name="Lally C.C.M."/>
            <person name="Spahn C.M.T."/>
            <person name="Daumke O."/>
        </authorList>
    </citation>
    <scope>X-RAY CRYSTALLOGRAPHY (2.40 ANGSTROMS) OF 1-77</scope>
    <scope>FUNCTION</scope>
    <scope>SUBUNIT</scope>
</reference>
<dbReference type="EMBL" id="X59720">
    <property type="protein sequence ID" value="CAA42312.1"/>
    <property type="molecule type" value="Genomic_DNA"/>
</dbReference>
<dbReference type="EMBL" id="AY558148">
    <property type="protein sequence ID" value="AAS56474.1"/>
    <property type="molecule type" value="Genomic_DNA"/>
</dbReference>
<dbReference type="EMBL" id="BK006937">
    <property type="protein sequence ID" value="DAA07498.1"/>
    <property type="molecule type" value="Genomic_DNA"/>
</dbReference>
<dbReference type="PIR" id="S07694">
    <property type="entry name" value="BVBYK1"/>
</dbReference>
<dbReference type="RefSeq" id="NP_009948.1">
    <property type="nucleotide sequence ID" value="NM_001178734.1"/>
</dbReference>
<dbReference type="PDB" id="6YGA">
    <property type="method" value="X-ray"/>
    <property type="resolution" value="2.40 A"/>
    <property type="chains" value="C=1-77"/>
</dbReference>
<dbReference type="PDB" id="6YGB">
    <property type="method" value="X-ray"/>
    <property type="resolution" value="2.45 A"/>
    <property type="chains" value="C=1-77"/>
</dbReference>
<dbReference type="PDB" id="6YGC">
    <property type="method" value="X-ray"/>
    <property type="resolution" value="2.99 A"/>
    <property type="chains" value="C=1-77"/>
</dbReference>
<dbReference type="PDB" id="6YGD">
    <property type="method" value="X-ray"/>
    <property type="resolution" value="2.75 A"/>
    <property type="chains" value="C=1-77"/>
</dbReference>
<dbReference type="PDBsum" id="6YGA"/>
<dbReference type="PDBsum" id="6YGB"/>
<dbReference type="PDBsum" id="6YGC"/>
<dbReference type="PDBsum" id="6YGD"/>
<dbReference type="SMR" id="P23059"/>
<dbReference type="BioGRID" id="31002">
    <property type="interactions" value="138"/>
</dbReference>
<dbReference type="ComplexPortal" id="CPX-781">
    <property type="entry name" value="NatC N-alpha-acetyltransferase complex"/>
</dbReference>
<dbReference type="DIP" id="DIP-1429N"/>
<dbReference type="FunCoup" id="P23059">
    <property type="interactions" value="492"/>
</dbReference>
<dbReference type="IntAct" id="P23059">
    <property type="interactions" value="6"/>
</dbReference>
<dbReference type="MINT" id="P23059"/>
<dbReference type="STRING" id="4932.YCR020C-A"/>
<dbReference type="GlyGen" id="P23059">
    <property type="glycosylation" value="2 sites, 1 O-linked glycan (2 sites)"/>
</dbReference>
<dbReference type="iPTMnet" id="P23059"/>
<dbReference type="PaxDb" id="4932-YCR020C-A"/>
<dbReference type="PeptideAtlas" id="P23059"/>
<dbReference type="EnsemblFungi" id="YCR020C-A_mRNA">
    <property type="protein sequence ID" value="YCR020C-A"/>
    <property type="gene ID" value="YCR020C-A"/>
</dbReference>
<dbReference type="GeneID" id="850383"/>
<dbReference type="KEGG" id="sce:YCR020C-A"/>
<dbReference type="AGR" id="SGD:S000000614"/>
<dbReference type="SGD" id="S000000614">
    <property type="gene designation" value="MAK31"/>
</dbReference>
<dbReference type="VEuPathDB" id="FungiDB:YCR020C-A"/>
<dbReference type="eggNOG" id="ENOG502SDEV">
    <property type="taxonomic scope" value="Eukaryota"/>
</dbReference>
<dbReference type="HOGENOM" id="CLU_076902_9_0_1"/>
<dbReference type="InParanoid" id="P23059"/>
<dbReference type="OMA" id="ALDCHAN"/>
<dbReference type="OrthoDB" id="368909at2759"/>
<dbReference type="BioCyc" id="YEAST:G3O-29336-MONOMER"/>
<dbReference type="BioGRID-ORCS" id="850383">
    <property type="hits" value="0 hits in 10 CRISPR screens"/>
</dbReference>
<dbReference type="PRO" id="PR:P23059"/>
<dbReference type="Proteomes" id="UP000002311">
    <property type="component" value="Chromosome III"/>
</dbReference>
<dbReference type="RNAct" id="P23059">
    <property type="molecule type" value="protein"/>
</dbReference>
<dbReference type="GO" id="GO:0005829">
    <property type="term" value="C:cytosol"/>
    <property type="evidence" value="ECO:0000304"/>
    <property type="project" value="Reactome"/>
</dbReference>
<dbReference type="GO" id="GO:0031417">
    <property type="term" value="C:NatC complex"/>
    <property type="evidence" value="ECO:0000314"/>
    <property type="project" value="SGD"/>
</dbReference>
<dbReference type="GO" id="GO:0071011">
    <property type="term" value="C:precatalytic spliceosome"/>
    <property type="evidence" value="ECO:0000318"/>
    <property type="project" value="GO_Central"/>
</dbReference>
<dbReference type="GO" id="GO:0046540">
    <property type="term" value="C:U4/U6 x U5 tri-snRNP complex"/>
    <property type="evidence" value="ECO:0000318"/>
    <property type="project" value="GO_Central"/>
</dbReference>
<dbReference type="GO" id="GO:0005688">
    <property type="term" value="C:U6 snRNP"/>
    <property type="evidence" value="ECO:0000318"/>
    <property type="project" value="GO_Central"/>
</dbReference>
<dbReference type="GO" id="GO:0003729">
    <property type="term" value="F:mRNA binding"/>
    <property type="evidence" value="ECO:0000318"/>
    <property type="project" value="GO_Central"/>
</dbReference>
<dbReference type="GO" id="GO:0000398">
    <property type="term" value="P:mRNA splicing, via spliceosome"/>
    <property type="evidence" value="ECO:0000318"/>
    <property type="project" value="GO_Central"/>
</dbReference>
<dbReference type="CDD" id="cd06168">
    <property type="entry name" value="LSMD1"/>
    <property type="match status" value="1"/>
</dbReference>
<dbReference type="Gene3D" id="2.30.30.100">
    <property type="match status" value="1"/>
</dbReference>
<dbReference type="InterPro" id="IPR010920">
    <property type="entry name" value="LSM_dom_sf"/>
</dbReference>
<dbReference type="InterPro" id="IPR034110">
    <property type="entry name" value="LSMD1_Sm"/>
</dbReference>
<dbReference type="InterPro" id="IPR047575">
    <property type="entry name" value="Sm"/>
</dbReference>
<dbReference type="InterPro" id="IPR001163">
    <property type="entry name" value="Sm_dom_euk/arc"/>
</dbReference>
<dbReference type="Pfam" id="PF01423">
    <property type="entry name" value="LSM"/>
    <property type="match status" value="1"/>
</dbReference>
<dbReference type="SMART" id="SM00651">
    <property type="entry name" value="Sm"/>
    <property type="match status" value="1"/>
</dbReference>
<dbReference type="SUPFAM" id="SSF50182">
    <property type="entry name" value="Sm-like ribonucleoproteins"/>
    <property type="match status" value="1"/>
</dbReference>
<dbReference type="PROSITE" id="PS52002">
    <property type="entry name" value="SM"/>
    <property type="match status" value="1"/>
</dbReference>
<name>NAA38_YEAST</name>
<evidence type="ECO:0000255" key="1">
    <source>
        <dbReference type="PROSITE-ProRule" id="PRU01346"/>
    </source>
</evidence>
<evidence type="ECO:0000269" key="2">
    <source>
    </source>
</evidence>
<evidence type="ECO:0000269" key="3">
    <source>
    </source>
</evidence>
<evidence type="ECO:0000269" key="4">
    <source>
    </source>
</evidence>
<evidence type="ECO:0000269" key="5">
    <source>
    </source>
</evidence>
<evidence type="ECO:0000269" key="6">
    <source>
    </source>
</evidence>
<evidence type="ECO:0007744" key="7">
    <source>
        <dbReference type="PDB" id="6YGA"/>
    </source>
</evidence>
<evidence type="ECO:0007744" key="8">
    <source>
        <dbReference type="PDB" id="6YGB"/>
    </source>
</evidence>
<evidence type="ECO:0007744" key="9">
    <source>
        <dbReference type="PDB" id="6YGC"/>
    </source>
</evidence>
<evidence type="ECO:0007744" key="10">
    <source>
        <dbReference type="PDB" id="6YGD"/>
    </source>
</evidence>
<evidence type="ECO:0007829" key="11">
    <source>
        <dbReference type="PDB" id="6YGA"/>
    </source>
</evidence>
<comment type="function">
    <text evidence="2 4 5 6">Component of the NatC N-terminal acetyltransferase, which associates with the ribosome to acetylate nascent protein chains in a cotranslational manner (PubMed:11274203, PubMed:15077114, PubMed:33139728). NatC acetylates protein N-termini starting with methionine, followed by a hydrophobic or amphipathic amino acid, with amino acids at positions 3 and 4 also contributing to NatC recognition. The first 4 amino acids of cognate substrates are recognized at the Naa30/MAK3-Naa35/MAK10 interface (PubMed:33139728). NatC-dependent acetylation targets various substrate proteins to specific subcellular sites, including isoform 2 of tRNA-specific methyltransferase Trm1 to the inner nuclear membrane (PubMed:15911569). Catalyzes the acetylation of the N-terminal Met of ARF-like GTPase ARL3, which is required for its Golgi localization via interaction with the Golgi-localized integral membrane protein SYS1, which may serve as a receptor for acetylated ARL3 (PubMed:15077114). Catalyzes the acetylation of the N-terminal Met of L-A virus Gag protein. MAK31 is necessary for the structural stability of L-A double-stranded RNA-containing particles. Necessary for growth at 37 degrees Celsius as well as for maintenance of the killer plasmid (PubMed:11274203).</text>
</comment>
<comment type="subunit">
    <text evidence="2 6">Component of the N-terminal acetyltransferase C (NatC) complex, composed of the catalytic subunit Naa30/MAK3, a large auxiliary subunit Naa35/MAK10 and a small auxiliary subunit Naa38/MAK31.</text>
</comment>
<comment type="interaction">
    <interactant intactId="EBI-10950">
        <id>P23059</id>
    </interactant>
    <interactant intactId="EBI-10388">
        <id>Q03503</id>
        <label>MAK3</label>
    </interactant>
    <organismsDiffer>false</organismsDiffer>
    <experiments>2</experiments>
</comment>
<comment type="miscellaneous">
    <text evidence="3">Present with 2140 molecules/cell in log phase SD medium.</text>
</comment>
<organism>
    <name type="scientific">Saccharomyces cerevisiae (strain ATCC 204508 / S288c)</name>
    <name type="common">Baker's yeast</name>
    <dbReference type="NCBI Taxonomy" id="559292"/>
    <lineage>
        <taxon>Eukaryota</taxon>
        <taxon>Fungi</taxon>
        <taxon>Dikarya</taxon>
        <taxon>Ascomycota</taxon>
        <taxon>Saccharomycotina</taxon>
        <taxon>Saccharomycetes</taxon>
        <taxon>Saccharomycetales</taxon>
        <taxon>Saccharomycetaceae</taxon>
        <taxon>Saccharomyces</taxon>
    </lineage>
</organism>